<dbReference type="EMBL" id="AE017224">
    <property type="protein sequence ID" value="AAX75514.1"/>
    <property type="molecule type" value="Genomic_DNA"/>
</dbReference>
<dbReference type="RefSeq" id="WP_002966516.1">
    <property type="nucleotide sequence ID" value="NC_006933.1"/>
</dbReference>
<dbReference type="EnsemblBacteria" id="AAX75514">
    <property type="protein sequence ID" value="AAX75514"/>
    <property type="gene ID" value="BruAb2_0063"/>
</dbReference>
<dbReference type="KEGG" id="bmb:BruAb2_0063"/>
<dbReference type="HOGENOM" id="CLU_211045_0_0_5"/>
<dbReference type="Proteomes" id="UP000000540">
    <property type="component" value="Chromosome II"/>
</dbReference>
<dbReference type="GO" id="GO:0005886">
    <property type="term" value="C:plasma membrane"/>
    <property type="evidence" value="ECO:0007669"/>
    <property type="project" value="UniProtKB-SubCell"/>
</dbReference>
<dbReference type="InterPro" id="IPR012640">
    <property type="entry name" value="Membr_lipoprot_lipid_attach_CS"/>
</dbReference>
<dbReference type="Pfam" id="PF08139">
    <property type="entry name" value="LPAM_1"/>
    <property type="match status" value="1"/>
</dbReference>
<dbReference type="PROSITE" id="PS51257">
    <property type="entry name" value="PROKAR_LIPOPROTEIN"/>
    <property type="match status" value="1"/>
</dbReference>
<organism>
    <name type="scientific">Brucella abortus biovar 1 (strain 9-941)</name>
    <dbReference type="NCBI Taxonomy" id="262698"/>
    <lineage>
        <taxon>Bacteria</taxon>
        <taxon>Pseudomonadati</taxon>
        <taxon>Pseudomonadota</taxon>
        <taxon>Alphaproteobacteria</taxon>
        <taxon>Hyphomicrobiales</taxon>
        <taxon>Brucellaceae</taxon>
        <taxon>Brucella/Ochrobactrum group</taxon>
        <taxon>Brucella</taxon>
    </lineage>
</organism>
<gene>
    <name type="primary">virB7</name>
    <name type="ordered locus">BruAb2_0063</name>
</gene>
<evidence type="ECO:0000255" key="1">
    <source>
        <dbReference type="PROSITE-ProRule" id="PRU00303"/>
    </source>
</evidence>
<evidence type="ECO:0000256" key="2">
    <source>
        <dbReference type="SAM" id="MobiDB-lite"/>
    </source>
</evidence>
<proteinExistence type="inferred from homology"/>
<keyword id="KW-1003">Cell membrane</keyword>
<keyword id="KW-0449">Lipoprotein</keyword>
<keyword id="KW-0472">Membrane</keyword>
<keyword id="KW-0564">Palmitate</keyword>
<keyword id="KW-0732">Signal</keyword>
<keyword id="KW-0843">Virulence</keyword>
<accession>P0C535</accession>
<accession>Q57A20</accession>
<accession>Q7BMZ7</accession>
<reference key="1">
    <citation type="journal article" date="2005" name="J. Bacteriol.">
        <title>Completion of the genome sequence of Brucella abortus and comparison to the highly similar genomes of Brucella melitensis and Brucella suis.</title>
        <authorList>
            <person name="Halling S.M."/>
            <person name="Peterson-Burch B.D."/>
            <person name="Bricker B.J."/>
            <person name="Zuerner R.L."/>
            <person name="Qing Z."/>
            <person name="Li L.-L."/>
            <person name="Kapur V."/>
            <person name="Alt D.P."/>
            <person name="Olsen S.C."/>
        </authorList>
    </citation>
    <scope>NUCLEOTIDE SEQUENCE [LARGE SCALE GENOMIC DNA]</scope>
    <source>
        <strain>9-941</strain>
    </source>
</reference>
<protein>
    <recommendedName>
        <fullName>Type IV secretion system putative lipoprotein virB7</fullName>
    </recommendedName>
</protein>
<sequence length="57" mass="5931">MKKVILAFVATAFLAGCTTTGPAVVPVLDGKPRVPVNKSVPAKPPLAQPNPVDTYED</sequence>
<comment type="subcellular location">
    <subcellularLocation>
        <location evidence="1">Cell membrane</location>
        <topology evidence="1">Lipid-anchor</topology>
    </subcellularLocation>
</comment>
<name>VIRB7_BRUAB</name>
<feature type="signal peptide" evidence="1">
    <location>
        <begin position="1"/>
        <end position="16"/>
    </location>
</feature>
<feature type="chain" id="PRO_0000291441" description="Type IV secretion system putative lipoprotein virB7">
    <location>
        <begin position="17"/>
        <end position="57"/>
    </location>
</feature>
<feature type="region of interest" description="Disordered" evidence="2">
    <location>
        <begin position="35"/>
        <end position="57"/>
    </location>
</feature>
<feature type="lipid moiety-binding region" description="N-palmitoyl cysteine" evidence="1">
    <location>
        <position position="17"/>
    </location>
</feature>
<feature type="lipid moiety-binding region" description="S-diacylglycerol cysteine" evidence="1">
    <location>
        <position position="17"/>
    </location>
</feature>